<keyword id="KW-0963">Cytoplasm</keyword>
<keyword id="KW-0489">Methyltransferase</keyword>
<keyword id="KW-1185">Reference proteome</keyword>
<keyword id="KW-0949">S-adenosyl-L-methionine</keyword>
<keyword id="KW-0808">Transferase</keyword>
<keyword id="KW-0819">tRNA processing</keyword>
<reference key="1">
    <citation type="journal article" date="2005" name="Science">
        <title>Life at depth: Photobacterium profundum genome sequence and expression analysis.</title>
        <authorList>
            <person name="Vezzi A."/>
            <person name="Campanaro S."/>
            <person name="D'Angelo M."/>
            <person name="Simonato F."/>
            <person name="Vitulo N."/>
            <person name="Lauro F.M."/>
            <person name="Cestaro A."/>
            <person name="Malacrida G."/>
            <person name="Simionati B."/>
            <person name="Cannata N."/>
            <person name="Romualdi C."/>
            <person name="Bartlett D.H."/>
            <person name="Valle G."/>
        </authorList>
    </citation>
    <scope>NUCLEOTIDE SEQUENCE [LARGE SCALE GENOMIC DNA]</scope>
    <source>
        <strain>ATCC BAA-1253 / SS9</strain>
    </source>
</reference>
<comment type="function">
    <text evidence="1">Specifically methylates the adenine in position 37 of tRNA(1)(Val) (anticodon cmo5UAC).</text>
</comment>
<comment type="catalytic activity">
    <reaction evidence="1">
        <text>adenosine(37) in tRNA1(Val) + S-adenosyl-L-methionine = N(6)-methyladenosine(37) in tRNA1(Val) + S-adenosyl-L-homocysteine + H(+)</text>
        <dbReference type="Rhea" id="RHEA:43160"/>
        <dbReference type="Rhea" id="RHEA-COMP:10369"/>
        <dbReference type="Rhea" id="RHEA-COMP:10370"/>
        <dbReference type="ChEBI" id="CHEBI:15378"/>
        <dbReference type="ChEBI" id="CHEBI:57856"/>
        <dbReference type="ChEBI" id="CHEBI:59789"/>
        <dbReference type="ChEBI" id="CHEBI:74411"/>
        <dbReference type="ChEBI" id="CHEBI:74449"/>
        <dbReference type="EC" id="2.1.1.223"/>
    </reaction>
</comment>
<comment type="subcellular location">
    <subcellularLocation>
        <location evidence="1">Cytoplasm</location>
    </subcellularLocation>
</comment>
<comment type="similarity">
    <text evidence="1">Belongs to the methyltransferase superfamily. tRNA (adenine-N(6)-)-methyltransferase family.</text>
</comment>
<comment type="sequence caution" evidence="2">
    <conflict type="erroneous initiation">
        <sequence resource="EMBL-CDS" id="CAG18986"/>
    </conflict>
</comment>
<gene>
    <name type="ordered locus">PBPRA0563</name>
</gene>
<feature type="chain" id="PRO_0000387396" description="tRNA1(Val) (adenine(37)-N6)-methyltransferase">
    <location>
        <begin position="1"/>
        <end position="240"/>
    </location>
</feature>
<name>TRMN6_PHOPR</name>
<protein>
    <recommendedName>
        <fullName evidence="1">tRNA1(Val) (adenine(37)-N6)-methyltransferase</fullName>
        <ecNumber evidence="1">2.1.1.223</ecNumber>
    </recommendedName>
    <alternativeName>
        <fullName evidence="1">tRNA m6A37 methyltransferase</fullName>
    </alternativeName>
</protein>
<proteinExistence type="inferred from homology"/>
<accession>Q6LUN9</accession>
<evidence type="ECO:0000255" key="1">
    <source>
        <dbReference type="HAMAP-Rule" id="MF_01872"/>
    </source>
</evidence>
<evidence type="ECO:0000305" key="2"/>
<sequence length="240" mass="26122">MAKGFTFKQFHVDDGGCGMAVSTDGVLLGAWATLPKQGKLIDIGTGSGLLALMMAQRTAPAPCSIIAIELDDSAADAAAKNFSNSPWSSSLHCVKQDIQQWNRTQPKNNIGNIICNPPYFNFGLQADSQTRATARHTDTLTHDALLQSITHLLAPEGIVSLILPEYEGRQLIQAAEKYGLQCQRLCEVKSTEKKPVSRLLIELTSSTVKSAPQKEALCIHDSGQYSAQFIALTRDFYLKL</sequence>
<dbReference type="EC" id="2.1.1.223" evidence="1"/>
<dbReference type="EMBL" id="CR378664">
    <property type="protein sequence ID" value="CAG18986.1"/>
    <property type="status" value="ALT_INIT"/>
    <property type="molecule type" value="Genomic_DNA"/>
</dbReference>
<dbReference type="RefSeq" id="WP_041393878.1">
    <property type="nucleotide sequence ID" value="NC_006370.1"/>
</dbReference>
<dbReference type="SMR" id="Q6LUN9"/>
<dbReference type="STRING" id="298386.PBPRA0563"/>
<dbReference type="KEGG" id="ppr:PBPRA0563"/>
<dbReference type="eggNOG" id="COG4123">
    <property type="taxonomic scope" value="Bacteria"/>
</dbReference>
<dbReference type="HOGENOM" id="CLU_061983_0_0_6"/>
<dbReference type="Proteomes" id="UP000000593">
    <property type="component" value="Chromosome 1"/>
</dbReference>
<dbReference type="GO" id="GO:0005737">
    <property type="term" value="C:cytoplasm"/>
    <property type="evidence" value="ECO:0007669"/>
    <property type="project" value="UniProtKB-SubCell"/>
</dbReference>
<dbReference type="GO" id="GO:0003676">
    <property type="term" value="F:nucleic acid binding"/>
    <property type="evidence" value="ECO:0007669"/>
    <property type="project" value="InterPro"/>
</dbReference>
<dbReference type="GO" id="GO:0016430">
    <property type="term" value="F:tRNA (adenine-N6)-methyltransferase activity"/>
    <property type="evidence" value="ECO:0007669"/>
    <property type="project" value="UniProtKB-UniRule"/>
</dbReference>
<dbReference type="GO" id="GO:0032259">
    <property type="term" value="P:methylation"/>
    <property type="evidence" value="ECO:0007669"/>
    <property type="project" value="UniProtKB-KW"/>
</dbReference>
<dbReference type="GO" id="GO:0008033">
    <property type="term" value="P:tRNA processing"/>
    <property type="evidence" value="ECO:0007669"/>
    <property type="project" value="UniProtKB-UniRule"/>
</dbReference>
<dbReference type="Gene3D" id="3.40.50.150">
    <property type="entry name" value="Vaccinia Virus protein VP39"/>
    <property type="match status" value="1"/>
</dbReference>
<dbReference type="HAMAP" id="MF_01872">
    <property type="entry name" value="tRNA_methyltr_YfiC"/>
    <property type="match status" value="1"/>
</dbReference>
<dbReference type="InterPro" id="IPR002052">
    <property type="entry name" value="DNA_methylase_N6_adenine_CS"/>
</dbReference>
<dbReference type="InterPro" id="IPR029063">
    <property type="entry name" value="SAM-dependent_MTases_sf"/>
</dbReference>
<dbReference type="InterPro" id="IPR007848">
    <property type="entry name" value="Small_mtfrase_dom"/>
</dbReference>
<dbReference type="InterPro" id="IPR050210">
    <property type="entry name" value="tRNA_Adenine-N(6)_MTase"/>
</dbReference>
<dbReference type="InterPro" id="IPR022882">
    <property type="entry name" value="tRNA_adenine-N6_MeTrfase"/>
</dbReference>
<dbReference type="PANTHER" id="PTHR47739">
    <property type="entry name" value="TRNA1(VAL) (ADENINE(37)-N6)-METHYLTRANSFERASE"/>
    <property type="match status" value="1"/>
</dbReference>
<dbReference type="PANTHER" id="PTHR47739:SF1">
    <property type="entry name" value="TRNA1(VAL) (ADENINE(37)-N6)-METHYLTRANSFERASE"/>
    <property type="match status" value="1"/>
</dbReference>
<dbReference type="Pfam" id="PF05175">
    <property type="entry name" value="MTS"/>
    <property type="match status" value="1"/>
</dbReference>
<dbReference type="SUPFAM" id="SSF53335">
    <property type="entry name" value="S-adenosyl-L-methionine-dependent methyltransferases"/>
    <property type="match status" value="1"/>
</dbReference>
<dbReference type="PROSITE" id="PS00092">
    <property type="entry name" value="N6_MTASE"/>
    <property type="match status" value="1"/>
</dbReference>
<organism>
    <name type="scientific">Photobacterium profundum (strain SS9)</name>
    <dbReference type="NCBI Taxonomy" id="298386"/>
    <lineage>
        <taxon>Bacteria</taxon>
        <taxon>Pseudomonadati</taxon>
        <taxon>Pseudomonadota</taxon>
        <taxon>Gammaproteobacteria</taxon>
        <taxon>Vibrionales</taxon>
        <taxon>Vibrionaceae</taxon>
        <taxon>Photobacterium</taxon>
    </lineage>
</organism>